<gene>
    <name type="primary">RNL2</name>
    <name type="synonym">RLX2</name>
</gene>
<accession>P51455</accession>
<accession>P79267</accession>
<proteinExistence type="evidence at transcript level"/>
<sequence length="166" mass="18761">SRAVADSWMDEVIKLCGRELVRAQIAICGKSTWSKRSLSQEDAPQTPRPVAEIVPSFINKDTETINMMSEFVANLPQELKLTLSEMQPALPQLQQYVPVLKDSSLLFEEFKKLIRNRQSEAADSSPSELKYLGLDTHSRKKRQLYSALANKCCHVGCTKRSLARFC</sequence>
<dbReference type="EMBL" id="Z27245">
    <property type="protein sequence ID" value="CAA81758.1"/>
    <property type="molecule type" value="mRNA"/>
</dbReference>
<dbReference type="EMBL" id="S83209">
    <property type="protein sequence ID" value="AAD14430.1"/>
    <property type="status" value="ALT_SEQ"/>
    <property type="molecule type" value="mRNA"/>
</dbReference>
<dbReference type="PIR" id="S42786">
    <property type="entry name" value="S42786"/>
</dbReference>
<dbReference type="SMR" id="P51455"/>
<dbReference type="STRING" id="9598.ENSPTRP00000035498"/>
<dbReference type="PaxDb" id="9598-ENSPTRP00000060253"/>
<dbReference type="InParanoid" id="P51455"/>
<dbReference type="Proteomes" id="UP000002277">
    <property type="component" value="Unplaced"/>
</dbReference>
<dbReference type="GO" id="GO:0005576">
    <property type="term" value="C:extracellular region"/>
    <property type="evidence" value="ECO:0007669"/>
    <property type="project" value="UniProtKB-SubCell"/>
</dbReference>
<dbReference type="GO" id="GO:0005179">
    <property type="term" value="F:hormone activity"/>
    <property type="evidence" value="ECO:0007669"/>
    <property type="project" value="UniProtKB-KW"/>
</dbReference>
<dbReference type="CDD" id="cd04365">
    <property type="entry name" value="IlGF_relaxin_like"/>
    <property type="match status" value="1"/>
</dbReference>
<dbReference type="Gene3D" id="1.10.100.10">
    <property type="entry name" value="Insulin-like"/>
    <property type="match status" value="1"/>
</dbReference>
<dbReference type="InterPro" id="IPR016179">
    <property type="entry name" value="Insulin-like"/>
</dbReference>
<dbReference type="InterPro" id="IPR036438">
    <property type="entry name" value="Insulin-like_sf"/>
</dbReference>
<dbReference type="InterPro" id="IPR022353">
    <property type="entry name" value="Insulin_CS"/>
</dbReference>
<dbReference type="InterPro" id="IPR022352">
    <property type="entry name" value="Insulin_family"/>
</dbReference>
<dbReference type="InterPro" id="IPR022421">
    <property type="entry name" value="Relaxin"/>
</dbReference>
<dbReference type="InterPro" id="IPR051042">
    <property type="entry name" value="Repro_Hormone_Insulin-like"/>
</dbReference>
<dbReference type="PANTHER" id="PTHR12004:SF13">
    <property type="entry name" value="PRORELAXIN H2"/>
    <property type="match status" value="1"/>
</dbReference>
<dbReference type="PANTHER" id="PTHR12004">
    <property type="entry name" value="RELAXIN"/>
    <property type="match status" value="1"/>
</dbReference>
<dbReference type="Pfam" id="PF00049">
    <property type="entry name" value="Insulin"/>
    <property type="match status" value="1"/>
</dbReference>
<dbReference type="PRINTS" id="PR00276">
    <property type="entry name" value="INSULINFAMLY"/>
</dbReference>
<dbReference type="PRINTS" id="PR02004">
    <property type="entry name" value="RELAXIN"/>
</dbReference>
<dbReference type="SMART" id="SM00078">
    <property type="entry name" value="IlGF"/>
    <property type="match status" value="1"/>
</dbReference>
<dbReference type="SUPFAM" id="SSF56994">
    <property type="entry name" value="Insulin-like"/>
    <property type="match status" value="1"/>
</dbReference>
<dbReference type="PROSITE" id="PS00262">
    <property type="entry name" value="INSULIN"/>
    <property type="match status" value="1"/>
</dbReference>
<name>REL2_PANTR</name>
<keyword id="KW-0025">Alternative splicing</keyword>
<keyword id="KW-0165">Cleavage on pair of basic residues</keyword>
<keyword id="KW-1015">Disulfide bond</keyword>
<keyword id="KW-0372">Hormone</keyword>
<keyword id="KW-1185">Reference proteome</keyword>
<keyword id="KW-0964">Secreted</keyword>
<keyword id="KW-0732">Signal</keyword>
<evidence type="ECO:0000250" key="1"/>
<evidence type="ECO:0000269" key="2">
    <source>
    </source>
</evidence>
<evidence type="ECO:0000269" key="3">
    <source>
    </source>
</evidence>
<evidence type="ECO:0000303" key="4">
    <source>
    </source>
</evidence>
<evidence type="ECO:0000305" key="5"/>
<feature type="signal peptide" evidence="1">
    <location>
        <begin position="1" status="less than"/>
        <end position="5"/>
    </location>
</feature>
<feature type="peptide" id="PRO_0000016109" description="Relaxin B chain" evidence="1">
    <location>
        <begin position="6"/>
        <end position="34"/>
    </location>
</feature>
<feature type="propeptide" id="PRO_0000016110" description="Connecting peptide" evidence="1">
    <location>
        <begin position="37"/>
        <end position="138"/>
    </location>
</feature>
<feature type="peptide" id="PRO_0000016111" description="Relaxin A chain" evidence="1">
    <location>
        <begin position="143"/>
        <end position="166"/>
    </location>
</feature>
<feature type="disulfide bond" description="Interchain (between B and A chains)" evidence="1">
    <location>
        <begin position="16"/>
        <end position="153"/>
    </location>
</feature>
<feature type="disulfide bond" description="Interchain (between B and A chains)" evidence="1">
    <location>
        <begin position="28"/>
        <end position="166"/>
    </location>
</feature>
<feature type="disulfide bond" evidence="1">
    <location>
        <begin position="152"/>
        <end position="157"/>
    </location>
</feature>
<feature type="splice variant" id="VSP_002713" description="In isoform 2." evidence="4">
    <original>EIVPSFINKDTETINMMSEFVANLPQELKLTLSEMQPALPQLQQYVP</original>
    <variation>GDFIQTVSLGISPDGGKALRTGSCFTREFLGALSKLCHPSSTKIQKP</variation>
    <location>
        <begin position="52"/>
        <end position="98"/>
    </location>
</feature>
<feature type="splice variant" id="VSP_002714" description="In isoform 2." evidence="4">
    <location>
        <begin position="99"/>
        <end position="166"/>
    </location>
</feature>
<feature type="sequence variant" id="VAR_018717" description="In some alleles.">
    <original>KSTWS</original>
    <variation>MSTLG</variation>
    <location>
        <begin position="30"/>
        <end position="34"/>
    </location>
</feature>
<feature type="non-terminal residue">
    <location>
        <position position="1"/>
    </location>
</feature>
<organism>
    <name type="scientific">Pan troglodytes</name>
    <name type="common">Chimpanzee</name>
    <dbReference type="NCBI Taxonomy" id="9598"/>
    <lineage>
        <taxon>Eukaryota</taxon>
        <taxon>Metazoa</taxon>
        <taxon>Chordata</taxon>
        <taxon>Craniata</taxon>
        <taxon>Vertebrata</taxon>
        <taxon>Euteleostomi</taxon>
        <taxon>Mammalia</taxon>
        <taxon>Eutheria</taxon>
        <taxon>Euarchontoglires</taxon>
        <taxon>Primates</taxon>
        <taxon>Haplorrhini</taxon>
        <taxon>Catarrhini</taxon>
        <taxon>Hominidae</taxon>
        <taxon>Pan</taxon>
    </lineage>
</organism>
<protein>
    <recommendedName>
        <fullName>Prorelaxin H2</fullName>
    </recommendedName>
    <component>
        <recommendedName>
            <fullName>Relaxin B chain</fullName>
        </recommendedName>
    </component>
    <component>
        <recommendedName>
            <fullName>Relaxin A chain</fullName>
        </recommendedName>
    </component>
</protein>
<reference key="1">
    <citation type="journal article" date="1994" name="J. Endocrinol.">
        <title>Characterization of two relaxin genes in the chimpanzee.</title>
        <authorList>
            <person name="Evans B.A."/>
            <person name="Fu P."/>
            <person name="Tregear G.W."/>
        </authorList>
    </citation>
    <scope>NUCLEOTIDE SEQUENCE [MRNA] (ISOFORM 1)</scope>
    <scope>TISSUE SPECIFICITY</scope>
    <source>
        <tissue>Placenta</tissue>
    </source>
</reference>
<reference key="2">
    <citation type="journal article" date="1996" name="Mol. Cell. Endocrinol.">
        <title>Expression of human relaxin genes: characterization of a novel alternatively-spliced human relaxin mRNA species.</title>
        <authorList>
            <person name="Gunnersen J.M."/>
            <person name="Fu P."/>
            <person name="Roche P.J."/>
            <person name="Tregear G.W."/>
        </authorList>
    </citation>
    <scope>NUCLEOTIDE SEQUENCE [MRNA] OF 52-166 (ISOFORM 2)</scope>
    <scope>TISSUE SPECIFICITY</scope>
    <source>
        <tissue>Ovary</tissue>
        <tissue>Placenta</tissue>
    </source>
</reference>
<comment type="function">
    <text>Relaxin is an ovarian hormone that acts with estrogen to produce dilatation of the birth canal in many mammals. May be involved in remodeling of connective tissues during pregnancy, promoting growth of pubic ligaments and ripening of the cervix.</text>
</comment>
<comment type="subunit">
    <text>Heterodimer of a B chain and an A chain linked by two disulfide bonds.</text>
</comment>
<comment type="subcellular location">
    <subcellularLocation>
        <location>Secreted</location>
    </subcellularLocation>
</comment>
<comment type="alternative products">
    <event type="alternative splicing"/>
    <isoform>
        <id>P51455-1</id>
        <name>1</name>
        <sequence type="displayed"/>
    </isoform>
    <isoform>
        <id>P51455-2</id>
        <name>2</name>
        <sequence type="described" ref="VSP_002713 VSP_002714"/>
    </isoform>
</comment>
<comment type="tissue specificity">
    <text evidence="2 3">Expressed in the corpus luteum of pregnancy and in the placenta.</text>
</comment>
<comment type="similarity">
    <text evidence="5">Belongs to the insulin family.</text>
</comment>